<feature type="chain" id="PRO_0000187953" description="ATP-dependent dethiobiotin synthetase BioD">
    <location>
        <begin position="1"/>
        <end position="227"/>
    </location>
</feature>
<feature type="active site" evidence="1">
    <location>
        <position position="38"/>
    </location>
</feature>
<feature type="binding site" evidence="1">
    <location>
        <begin position="13"/>
        <end position="18"/>
    </location>
    <ligand>
        <name>ATP</name>
        <dbReference type="ChEBI" id="CHEBI:30616"/>
    </ligand>
</feature>
<feature type="binding site" evidence="1">
    <location>
        <position position="17"/>
    </location>
    <ligand>
        <name>Mg(2+)</name>
        <dbReference type="ChEBI" id="CHEBI:18420"/>
    </ligand>
</feature>
<feature type="binding site" evidence="1">
    <location>
        <position position="55"/>
    </location>
    <ligand>
        <name>ATP</name>
        <dbReference type="ChEBI" id="CHEBI:30616"/>
    </ligand>
</feature>
<feature type="binding site" evidence="1">
    <location>
        <position position="55"/>
    </location>
    <ligand>
        <name>Mg(2+)</name>
        <dbReference type="ChEBI" id="CHEBI:18420"/>
    </ligand>
</feature>
<feature type="binding site" evidence="1">
    <location>
        <begin position="116"/>
        <end position="119"/>
    </location>
    <ligand>
        <name>ATP</name>
        <dbReference type="ChEBI" id="CHEBI:30616"/>
    </ligand>
</feature>
<feature type="binding site" evidence="1">
    <location>
        <position position="116"/>
    </location>
    <ligand>
        <name>Mg(2+)</name>
        <dbReference type="ChEBI" id="CHEBI:18420"/>
    </ligand>
</feature>
<proteinExistence type="inferred from homology"/>
<protein>
    <recommendedName>
        <fullName evidence="1">ATP-dependent dethiobiotin synthetase BioD</fullName>
        <ecNumber evidence="1">6.3.3.3</ecNumber>
    </recommendedName>
    <alternativeName>
        <fullName evidence="1">DTB synthetase</fullName>
        <shortName evidence="1">DTBS</shortName>
    </alternativeName>
    <alternativeName>
        <fullName evidence="1">Dethiobiotin synthase</fullName>
    </alternativeName>
</protein>
<reference key="1">
    <citation type="journal article" date="2003" name="Proc. Natl. Acad. Sci. U.S.A.">
        <title>Reductive genome evolution in Buchnera aphidicola.</title>
        <authorList>
            <person name="van Ham R.C.H.J."/>
            <person name="Kamerbeek J."/>
            <person name="Palacios C."/>
            <person name="Rausell C."/>
            <person name="Abascal F."/>
            <person name="Bastolla U."/>
            <person name="Fernandez J.M."/>
            <person name="Jimenez L."/>
            <person name="Postigo M."/>
            <person name="Silva F.J."/>
            <person name="Tamames J."/>
            <person name="Viguera E."/>
            <person name="Latorre A."/>
            <person name="Valencia A."/>
            <person name="Moran F."/>
            <person name="Moya A."/>
        </authorList>
    </citation>
    <scope>NUCLEOTIDE SEQUENCE [LARGE SCALE GENOMIC DNA]</scope>
    <source>
        <strain>Bp</strain>
    </source>
</reference>
<sequence length="227" mass="25858">MKNCWFITGTDTNIGKTVSSIILLELARRYGYNTSGYKPIAAGCRTNDFKQYNSDAVLLRKFSTVKLSYQEVNPYLFIDPVCPFFTNEKNHMNVCMNKLSSGLQRLKKKSNWILIEGIGGLHTPFSNEFVMSDWIKKENLKTILVIGIKLGCINHAILTQKAILSSGLEFFGWIANYLLPTDTYNLTHIDILKKNMKSPYLGCIAYTPNIYNQIHHIPITIKLPLQN</sequence>
<comment type="function">
    <text evidence="1">Catalyzes a mechanistically unusual reaction, the ATP-dependent insertion of CO2 between the N7 and N8 nitrogen atoms of 7,8-diaminopelargonic acid (DAPA, also called 7,8-diammoniononanoate) to form a ureido ring.</text>
</comment>
<comment type="catalytic activity">
    <reaction evidence="1">
        <text>(7R,8S)-7,8-diammoniononanoate + CO2 + ATP = (4R,5S)-dethiobiotin + ADP + phosphate + 3 H(+)</text>
        <dbReference type="Rhea" id="RHEA:15805"/>
        <dbReference type="ChEBI" id="CHEBI:15378"/>
        <dbReference type="ChEBI" id="CHEBI:16526"/>
        <dbReference type="ChEBI" id="CHEBI:30616"/>
        <dbReference type="ChEBI" id="CHEBI:43474"/>
        <dbReference type="ChEBI" id="CHEBI:149469"/>
        <dbReference type="ChEBI" id="CHEBI:149473"/>
        <dbReference type="ChEBI" id="CHEBI:456216"/>
        <dbReference type="EC" id="6.3.3.3"/>
    </reaction>
</comment>
<comment type="cofactor">
    <cofactor evidence="1">
        <name>Mg(2+)</name>
        <dbReference type="ChEBI" id="CHEBI:18420"/>
    </cofactor>
</comment>
<comment type="pathway">
    <text evidence="1">Cofactor biosynthesis; biotin biosynthesis; biotin from 7,8-diaminononanoate: step 1/2.</text>
</comment>
<comment type="subunit">
    <text evidence="1">Homodimer.</text>
</comment>
<comment type="subcellular location">
    <subcellularLocation>
        <location evidence="1">Cytoplasm</location>
    </subcellularLocation>
</comment>
<comment type="similarity">
    <text evidence="1">Belongs to the dethiobiotin synthetase family.</text>
</comment>
<evidence type="ECO:0000255" key="1">
    <source>
        <dbReference type="HAMAP-Rule" id="MF_00336"/>
    </source>
</evidence>
<gene>
    <name evidence="1" type="primary">bioD</name>
    <name type="ordered locus">bbp_269</name>
</gene>
<organism>
    <name type="scientific">Buchnera aphidicola subsp. Baizongia pistaciae (strain Bp)</name>
    <dbReference type="NCBI Taxonomy" id="224915"/>
    <lineage>
        <taxon>Bacteria</taxon>
        <taxon>Pseudomonadati</taxon>
        <taxon>Pseudomonadota</taxon>
        <taxon>Gammaproteobacteria</taxon>
        <taxon>Enterobacterales</taxon>
        <taxon>Erwiniaceae</taxon>
        <taxon>Buchnera</taxon>
    </lineage>
</organism>
<keyword id="KW-0067">ATP-binding</keyword>
<keyword id="KW-0093">Biotin biosynthesis</keyword>
<keyword id="KW-0963">Cytoplasm</keyword>
<keyword id="KW-0436">Ligase</keyword>
<keyword id="KW-0460">Magnesium</keyword>
<keyword id="KW-0479">Metal-binding</keyword>
<keyword id="KW-0547">Nucleotide-binding</keyword>
<keyword id="KW-1185">Reference proteome</keyword>
<accession>P59564</accession>
<name>BIOD_BUCBP</name>
<dbReference type="EC" id="6.3.3.3" evidence="1"/>
<dbReference type="EMBL" id="AE016826">
    <property type="protein sequence ID" value="AAO26994.1"/>
    <property type="molecule type" value="Genomic_DNA"/>
</dbReference>
<dbReference type="RefSeq" id="WP_011091395.1">
    <property type="nucleotide sequence ID" value="NC_004545.1"/>
</dbReference>
<dbReference type="SMR" id="P59564"/>
<dbReference type="STRING" id="224915.bbp_269"/>
<dbReference type="KEGG" id="bab:bbp_269"/>
<dbReference type="eggNOG" id="COG0132">
    <property type="taxonomic scope" value="Bacteria"/>
</dbReference>
<dbReference type="HOGENOM" id="CLU_072551_0_0_6"/>
<dbReference type="OrthoDB" id="9802097at2"/>
<dbReference type="UniPathway" id="UPA00078">
    <property type="reaction ID" value="UER00161"/>
</dbReference>
<dbReference type="Proteomes" id="UP000000601">
    <property type="component" value="Chromosome"/>
</dbReference>
<dbReference type="GO" id="GO:0005829">
    <property type="term" value="C:cytosol"/>
    <property type="evidence" value="ECO:0007669"/>
    <property type="project" value="TreeGrafter"/>
</dbReference>
<dbReference type="GO" id="GO:0005524">
    <property type="term" value="F:ATP binding"/>
    <property type="evidence" value="ECO:0007669"/>
    <property type="project" value="UniProtKB-UniRule"/>
</dbReference>
<dbReference type="GO" id="GO:0004141">
    <property type="term" value="F:dethiobiotin synthase activity"/>
    <property type="evidence" value="ECO:0007669"/>
    <property type="project" value="UniProtKB-UniRule"/>
</dbReference>
<dbReference type="GO" id="GO:0000287">
    <property type="term" value="F:magnesium ion binding"/>
    <property type="evidence" value="ECO:0007669"/>
    <property type="project" value="UniProtKB-UniRule"/>
</dbReference>
<dbReference type="GO" id="GO:0009102">
    <property type="term" value="P:biotin biosynthetic process"/>
    <property type="evidence" value="ECO:0007669"/>
    <property type="project" value="UniProtKB-UniRule"/>
</dbReference>
<dbReference type="CDD" id="cd03109">
    <property type="entry name" value="DTBS"/>
    <property type="match status" value="1"/>
</dbReference>
<dbReference type="FunFam" id="3.40.50.300:FF:000292">
    <property type="entry name" value="ATP-dependent dethiobiotin synthetase BioD"/>
    <property type="match status" value="1"/>
</dbReference>
<dbReference type="Gene3D" id="3.40.50.300">
    <property type="entry name" value="P-loop containing nucleotide triphosphate hydrolases"/>
    <property type="match status" value="1"/>
</dbReference>
<dbReference type="HAMAP" id="MF_00336">
    <property type="entry name" value="BioD"/>
    <property type="match status" value="1"/>
</dbReference>
<dbReference type="InterPro" id="IPR004472">
    <property type="entry name" value="DTB_synth_BioD"/>
</dbReference>
<dbReference type="InterPro" id="IPR027417">
    <property type="entry name" value="P-loop_NTPase"/>
</dbReference>
<dbReference type="NCBIfam" id="TIGR00347">
    <property type="entry name" value="bioD"/>
    <property type="match status" value="1"/>
</dbReference>
<dbReference type="PANTHER" id="PTHR43210">
    <property type="entry name" value="DETHIOBIOTIN SYNTHETASE"/>
    <property type="match status" value="1"/>
</dbReference>
<dbReference type="PANTHER" id="PTHR43210:SF5">
    <property type="entry name" value="DETHIOBIOTIN SYNTHETASE"/>
    <property type="match status" value="1"/>
</dbReference>
<dbReference type="Pfam" id="PF13500">
    <property type="entry name" value="AAA_26"/>
    <property type="match status" value="1"/>
</dbReference>
<dbReference type="PIRSF" id="PIRSF006755">
    <property type="entry name" value="DTB_synth"/>
    <property type="match status" value="1"/>
</dbReference>
<dbReference type="SUPFAM" id="SSF52540">
    <property type="entry name" value="P-loop containing nucleoside triphosphate hydrolases"/>
    <property type="match status" value="1"/>
</dbReference>